<organism>
    <name type="scientific">Picea glauca</name>
    <name type="common">White spruce</name>
    <name type="synonym">Pinus glauca</name>
    <dbReference type="NCBI Taxonomy" id="3330"/>
    <lineage>
        <taxon>Eukaryota</taxon>
        <taxon>Viridiplantae</taxon>
        <taxon>Streptophyta</taxon>
        <taxon>Embryophyta</taxon>
        <taxon>Tracheophyta</taxon>
        <taxon>Spermatophyta</taxon>
        <taxon>Pinopsida</taxon>
        <taxon>Pinidae</taxon>
        <taxon>Conifers I</taxon>
        <taxon>Pinales</taxon>
        <taxon>Pinaceae</taxon>
        <taxon>Picea</taxon>
    </lineage>
</organism>
<accession>C7ASI9</accession>
<protein>
    <recommendedName>
        <fullName>Carene synthase, chloroplastic</fullName>
        <shortName>PgTPS-3car</shortName>
        <ecNumber>4.2.3.107</ecNumber>
    </recommendedName>
    <alternativeName>
        <fullName>(+)-car-3-ene synthase</fullName>
    </alternativeName>
    <alternativeName>
        <fullName>3-carene cyclase</fullName>
    </alternativeName>
</protein>
<comment type="function">
    <text evidence="3">Terpene synthase (TPS) involved in defensive oleoresin formation in conifers in response to insect attack or other injury.</text>
</comment>
<comment type="catalytic activity">
    <reaction>
        <text>(2E)-geranyl diphosphate = (+)-car-3-ene + diphosphate</text>
        <dbReference type="Rhea" id="RHEA:32539"/>
        <dbReference type="ChEBI" id="CHEBI:7"/>
        <dbReference type="ChEBI" id="CHEBI:33019"/>
        <dbReference type="ChEBI" id="CHEBI:58057"/>
        <dbReference type="EC" id="4.2.3.107"/>
    </reaction>
</comment>
<comment type="cofactor">
    <cofactor evidence="1">
        <name>Mg(2+)</name>
        <dbReference type="ChEBI" id="CHEBI:18420"/>
    </cofactor>
    <cofactor evidence="1">
        <name>Mn(2+)</name>
        <dbReference type="ChEBI" id="CHEBI:29035"/>
    </cofactor>
    <text evidence="1">Binds 3 Mg(2+) or Mn(2+) ions per subunit.</text>
</comment>
<comment type="pathway">
    <text>Terpene metabolism; oleoresin biosynthesis.</text>
</comment>
<comment type="subcellular location">
    <subcellularLocation>
        <location evidence="4">Plastid</location>
        <location evidence="4">Chloroplast</location>
    </subcellularLocation>
</comment>
<comment type="similarity">
    <text evidence="4">Belongs to the terpene synthase family. Tpsd subfamily.</text>
</comment>
<evidence type="ECO:0000250" key="1"/>
<evidence type="ECO:0000255" key="2"/>
<evidence type="ECO:0000269" key="3">
    <source>
    </source>
</evidence>
<evidence type="ECO:0000305" key="4"/>
<proteinExistence type="inferred from homology"/>
<gene>
    <name type="primary">3CAR</name>
    <name type="ORF">PGB02</name>
</gene>
<name>3CAR1_PICGL</name>
<dbReference type="EC" id="4.2.3.107"/>
<dbReference type="EMBL" id="FJ609174">
    <property type="protein sequence ID" value="ACM04452.2"/>
    <property type="molecule type" value="Genomic_DNA"/>
</dbReference>
<dbReference type="SMR" id="C7ASI9"/>
<dbReference type="KEGG" id="ag:ACM04452"/>
<dbReference type="UniPathway" id="UPA00924"/>
<dbReference type="GO" id="GO:0009507">
    <property type="term" value="C:chloroplast"/>
    <property type="evidence" value="ECO:0007669"/>
    <property type="project" value="UniProtKB-SubCell"/>
</dbReference>
<dbReference type="GO" id="GO:0016829">
    <property type="term" value="F:lyase activity"/>
    <property type="evidence" value="ECO:0000250"/>
    <property type="project" value="UniProtKB"/>
</dbReference>
<dbReference type="GO" id="GO:0000287">
    <property type="term" value="F:magnesium ion binding"/>
    <property type="evidence" value="ECO:0007669"/>
    <property type="project" value="InterPro"/>
</dbReference>
<dbReference type="GO" id="GO:0010333">
    <property type="term" value="F:terpene synthase activity"/>
    <property type="evidence" value="ECO:0000250"/>
    <property type="project" value="UniProtKB"/>
</dbReference>
<dbReference type="GO" id="GO:0016102">
    <property type="term" value="P:diterpenoid biosynthetic process"/>
    <property type="evidence" value="ECO:0007669"/>
    <property type="project" value="InterPro"/>
</dbReference>
<dbReference type="GO" id="GO:0043693">
    <property type="term" value="P:monoterpene biosynthetic process"/>
    <property type="evidence" value="ECO:0000250"/>
    <property type="project" value="UniProtKB"/>
</dbReference>
<dbReference type="CDD" id="cd00684">
    <property type="entry name" value="Terpene_cyclase_plant_C1"/>
    <property type="match status" value="1"/>
</dbReference>
<dbReference type="FunFam" id="1.50.10.130:FF:000004">
    <property type="entry name" value="Carene synthase, chloroplastic"/>
    <property type="match status" value="1"/>
</dbReference>
<dbReference type="FunFam" id="1.10.600.10:FF:000005">
    <property type="entry name" value="Ent-kaur-16-ene synthase, chloroplastic"/>
    <property type="match status" value="1"/>
</dbReference>
<dbReference type="Gene3D" id="1.10.600.10">
    <property type="entry name" value="Farnesyl Diphosphate Synthase"/>
    <property type="match status" value="1"/>
</dbReference>
<dbReference type="Gene3D" id="1.50.10.130">
    <property type="entry name" value="Terpene synthase, N-terminal domain"/>
    <property type="match status" value="1"/>
</dbReference>
<dbReference type="InterPro" id="IPR008949">
    <property type="entry name" value="Isoprenoid_synthase_dom_sf"/>
</dbReference>
<dbReference type="InterPro" id="IPR034741">
    <property type="entry name" value="Terpene_cyclase-like_1_C"/>
</dbReference>
<dbReference type="InterPro" id="IPR044814">
    <property type="entry name" value="Terpene_cyclase_plant_C1"/>
</dbReference>
<dbReference type="InterPro" id="IPR001906">
    <property type="entry name" value="Terpene_synth_N"/>
</dbReference>
<dbReference type="InterPro" id="IPR036965">
    <property type="entry name" value="Terpene_synth_N_sf"/>
</dbReference>
<dbReference type="InterPro" id="IPR050148">
    <property type="entry name" value="Terpene_synthase-like"/>
</dbReference>
<dbReference type="InterPro" id="IPR005630">
    <property type="entry name" value="Terpene_synthase_metal-bd"/>
</dbReference>
<dbReference type="InterPro" id="IPR008930">
    <property type="entry name" value="Terpenoid_cyclase/PrenylTrfase"/>
</dbReference>
<dbReference type="PANTHER" id="PTHR31225">
    <property type="entry name" value="OS04G0344100 PROTEIN-RELATED"/>
    <property type="match status" value="1"/>
</dbReference>
<dbReference type="Pfam" id="PF01397">
    <property type="entry name" value="Terpene_synth"/>
    <property type="match status" value="1"/>
</dbReference>
<dbReference type="Pfam" id="PF03936">
    <property type="entry name" value="Terpene_synth_C"/>
    <property type="match status" value="1"/>
</dbReference>
<dbReference type="SFLD" id="SFLDS00005">
    <property type="entry name" value="Isoprenoid_Synthase_Type_I"/>
    <property type="match status" value="1"/>
</dbReference>
<dbReference type="SFLD" id="SFLDG01019">
    <property type="entry name" value="Terpene_Cyclase_Like_1_C_Termi"/>
    <property type="match status" value="1"/>
</dbReference>
<dbReference type="SFLD" id="SFLDG01014">
    <property type="entry name" value="Terpene_Cyclase_Like_1_N-term"/>
    <property type="match status" value="1"/>
</dbReference>
<dbReference type="SUPFAM" id="SSF48239">
    <property type="entry name" value="Terpenoid cyclases/Protein prenyltransferases"/>
    <property type="match status" value="1"/>
</dbReference>
<dbReference type="SUPFAM" id="SSF48576">
    <property type="entry name" value="Terpenoid synthases"/>
    <property type="match status" value="1"/>
</dbReference>
<keyword id="KW-0150">Chloroplast</keyword>
<keyword id="KW-0456">Lyase</keyword>
<keyword id="KW-0460">Magnesium</keyword>
<keyword id="KW-0464">Manganese</keyword>
<keyword id="KW-0479">Metal-binding</keyword>
<keyword id="KW-0934">Plastid</keyword>
<keyword id="KW-0809">Transit peptide</keyword>
<feature type="transit peptide" description="Chloroplast" evidence="2">
    <location>
        <begin position="1"/>
        <end position="36"/>
    </location>
</feature>
<feature type="chain" id="PRO_0000418970" description="Carene synthase, chloroplastic">
    <location>
        <begin position="37"/>
        <end position="627"/>
    </location>
</feature>
<feature type="short sequence motif" description="DDXXD motif">
    <location>
        <begin position="378"/>
        <end position="382"/>
    </location>
</feature>
<feature type="binding site" evidence="1">
    <location>
        <position position="378"/>
    </location>
    <ligand>
        <name>Mg(2+)</name>
        <dbReference type="ChEBI" id="CHEBI:18420"/>
        <label>1</label>
    </ligand>
</feature>
<feature type="binding site" evidence="1">
    <location>
        <position position="378"/>
    </location>
    <ligand>
        <name>Mg(2+)</name>
        <dbReference type="ChEBI" id="CHEBI:18420"/>
        <label>2</label>
    </ligand>
</feature>
<feature type="binding site" evidence="1">
    <location>
        <position position="382"/>
    </location>
    <ligand>
        <name>Mg(2+)</name>
        <dbReference type="ChEBI" id="CHEBI:18420"/>
        <label>1</label>
    </ligand>
</feature>
<feature type="binding site" evidence="1">
    <location>
        <position position="382"/>
    </location>
    <ligand>
        <name>Mg(2+)</name>
        <dbReference type="ChEBI" id="CHEBI:18420"/>
        <label>2</label>
    </ligand>
</feature>
<feature type="binding site" evidence="1">
    <location>
        <position position="530"/>
    </location>
    <ligand>
        <name>Mg(2+)</name>
        <dbReference type="ChEBI" id="CHEBI:18420"/>
        <label>3</label>
    </ligand>
</feature>
<reference key="1">
    <citation type="journal article" date="2009" name="BMC Plant Biol.">
        <title>Targeted isolation, sequence assembly and characterization of two white spruce (Picea glauca) BAC clones for terpenoid synthase and cytochrome P450 genes involved in conifer defence reveal insights into a conifer genome.</title>
        <authorList>
            <person name="Hamberger B."/>
            <person name="Hall D."/>
            <person name="Yuen M."/>
            <person name="Oddy C."/>
            <person name="Hamberger B."/>
            <person name="Keeling C.I."/>
            <person name="Ritland C."/>
            <person name="Ritland K."/>
            <person name="Bohlmann J."/>
        </authorList>
    </citation>
    <scope>NUCLEOTIDE SEQUENCE [GENOMIC DNA]</scope>
    <scope>FUNCTION</scope>
    <source>
        <strain>cv. PG29</strain>
    </source>
</reference>
<sequence>MSVISIMPLASKPCLNKSFISSTHEPKALRRPISTVGLCRRAKSVTASMSMSSSTAVSDDGVQRRIGNHHSNLWDDNFIQSLSSPYGPSSYGERAERLIGEVKEIFNRISMANGELVSHVDDLLQHLSMVDNVERLGIDRHFQTEIKVSLDYVYSYWSEKGIGPGRDIVCADLNTTALGFRVLRLHGYTVFPDVFEQFKDQMGRIACSANQTERQISSILNLFRASLIAFPWEKVMEEAEIFSTAYLKEALQTIPVSSLSREIQYVLDYRWHSDLPRLETRTYIDILRENATNETLDMKTEKLLELAKVEFNIFNSLQQNELKCVSRWWKESGSPDLTFIRHRQVEFYTLVSGIDMEPKRSTFRINFVKICHFVTILDDMYDTFGTIDELRLFTAAVTRWDKSATECLPEYMKGVYIDLYETVNELAREAHKSQGRDTLNYAREALEDYLGSYLKEAEWISTGYIPTFEEYLENGKVSSAHRIATLQPILMLDVPFPPHVLQEIDFPSKFNDLAGSILRLRGDTRCYQNDRARGEEASCISCYMKDNPGSTEEDALNHINGMIEKQIKELNWELLKPDKNVPISSKKHAFNISRGLHHFYKYRDGYTVANSETRNLVIKTVLEPVPM</sequence>